<gene>
    <name type="primary">pflA</name>
    <name type="ordered locus">SAOUHSC_00188</name>
</gene>
<name>PFLA_STAA8</name>
<comment type="function">
    <text evidence="1">Activation of pyruvate formate-lyase under anaerobic conditions by generation of an organic free radical, using S-adenosylmethionine and reduced flavodoxin as cosubstrates to produce 5'-deoxy-adenosine.</text>
</comment>
<comment type="catalytic activity">
    <reaction>
        <text>glycyl-[formate C-acetyltransferase] + reduced [flavodoxin] + S-adenosyl-L-methionine = glycin-2-yl radical-[formate C-acetyltransferase] + semiquinone [flavodoxin] + 5'-deoxyadenosine + L-methionine + H(+)</text>
        <dbReference type="Rhea" id="RHEA:19225"/>
        <dbReference type="Rhea" id="RHEA-COMP:10622"/>
        <dbReference type="Rhea" id="RHEA-COMP:12190"/>
        <dbReference type="Rhea" id="RHEA-COMP:12191"/>
        <dbReference type="Rhea" id="RHEA-COMP:14480"/>
        <dbReference type="ChEBI" id="CHEBI:15378"/>
        <dbReference type="ChEBI" id="CHEBI:17319"/>
        <dbReference type="ChEBI" id="CHEBI:29947"/>
        <dbReference type="ChEBI" id="CHEBI:32722"/>
        <dbReference type="ChEBI" id="CHEBI:57618"/>
        <dbReference type="ChEBI" id="CHEBI:57844"/>
        <dbReference type="ChEBI" id="CHEBI:59789"/>
        <dbReference type="ChEBI" id="CHEBI:140311"/>
        <dbReference type="EC" id="1.97.1.4"/>
    </reaction>
</comment>
<comment type="cofactor">
    <cofactor evidence="1">
        <name>[4Fe-4S] cluster</name>
        <dbReference type="ChEBI" id="CHEBI:49883"/>
    </cofactor>
    <text evidence="1">Binds 1 [4Fe-4S] cluster. The cluster is coordinated with 3 cysteines and an exchangeable S-adenosyl-L-methionine.</text>
</comment>
<comment type="subcellular location">
    <subcellularLocation>
        <location evidence="1">Cytoplasm</location>
    </subcellularLocation>
</comment>
<comment type="similarity">
    <text evidence="4">Belongs to the organic radical-activating enzymes family.</text>
</comment>
<evidence type="ECO:0000250" key="1"/>
<evidence type="ECO:0000250" key="2">
    <source>
        <dbReference type="UniProtKB" id="P0A9N4"/>
    </source>
</evidence>
<evidence type="ECO:0000255" key="3">
    <source>
        <dbReference type="PROSITE-ProRule" id="PRU01266"/>
    </source>
</evidence>
<evidence type="ECO:0000305" key="4"/>
<protein>
    <recommendedName>
        <fullName>Pyruvate formate-lyase-activating enzyme</fullName>
        <shortName>PFL-activating enzyme</shortName>
        <ecNumber>1.97.1.4</ecNumber>
    </recommendedName>
</protein>
<reference key="1">
    <citation type="book" date="2006" name="Gram positive pathogens, 2nd edition">
        <title>The Staphylococcus aureus NCTC 8325 genome.</title>
        <editorList>
            <person name="Fischetti V."/>
            <person name="Novick R."/>
            <person name="Ferretti J."/>
            <person name="Portnoy D."/>
            <person name="Rood J."/>
        </editorList>
        <authorList>
            <person name="Gillaspy A.F."/>
            <person name="Worrell V."/>
            <person name="Orvis J."/>
            <person name="Roe B.A."/>
            <person name="Dyer D.W."/>
            <person name="Iandolo J.J."/>
        </authorList>
    </citation>
    <scope>NUCLEOTIDE SEQUENCE [LARGE SCALE GENOMIC DNA]</scope>
    <source>
        <strain>NCTC 8325 / PS 47</strain>
    </source>
</reference>
<sequence>MLKGHLHSVESLGTVDGPGLRYILFTQGCLLRCLYCHNPDTWKISEPSREVTVDEMVNEILPYKPYFDASGGGVTVSGGEPLLQMPFLEKLFAELKENGVHTCLDTSAGCANDTKAFQRHFEELQKHTDLILLDIKHIDNDKHIRLTGKPNTHILNFARKLSDMKQPVWIRHVLVPGYSDDKDDLIKLGEFINSLDNVEKFEILPYHQLGVHKWKTLGIAYELEDVEAPDDEAVKAAYRYVNFKGKIPVEL</sequence>
<organism>
    <name type="scientific">Staphylococcus aureus (strain NCTC 8325 / PS 47)</name>
    <dbReference type="NCBI Taxonomy" id="93061"/>
    <lineage>
        <taxon>Bacteria</taxon>
        <taxon>Bacillati</taxon>
        <taxon>Bacillota</taxon>
        <taxon>Bacilli</taxon>
        <taxon>Bacillales</taxon>
        <taxon>Staphylococcaceae</taxon>
        <taxon>Staphylococcus</taxon>
    </lineage>
</organism>
<dbReference type="EC" id="1.97.1.4"/>
<dbReference type="EMBL" id="CP000253">
    <property type="protein sequence ID" value="ABD29366.1"/>
    <property type="molecule type" value="Genomic_DNA"/>
</dbReference>
<dbReference type="RefSeq" id="WP_000911657.1">
    <property type="nucleotide sequence ID" value="NZ_LS483365.1"/>
</dbReference>
<dbReference type="RefSeq" id="YP_498785.1">
    <property type="nucleotide sequence ID" value="NC_007795.1"/>
</dbReference>
<dbReference type="SMR" id="Q2G1D7"/>
<dbReference type="STRING" id="93061.SAOUHSC_00188"/>
<dbReference type="PaxDb" id="1280-SAXN108_0202"/>
<dbReference type="GeneID" id="3919502"/>
<dbReference type="KEGG" id="sao:SAOUHSC_00188"/>
<dbReference type="PATRIC" id="fig|93061.5.peg.176"/>
<dbReference type="eggNOG" id="COG1180">
    <property type="taxonomic scope" value="Bacteria"/>
</dbReference>
<dbReference type="HOGENOM" id="CLU_058969_1_1_9"/>
<dbReference type="OrthoDB" id="9782387at2"/>
<dbReference type="PRO" id="PR:Q2G1D7"/>
<dbReference type="Proteomes" id="UP000008816">
    <property type="component" value="Chromosome"/>
</dbReference>
<dbReference type="GO" id="GO:0005737">
    <property type="term" value="C:cytoplasm"/>
    <property type="evidence" value="ECO:0007669"/>
    <property type="project" value="UniProtKB-SubCell"/>
</dbReference>
<dbReference type="GO" id="GO:0051539">
    <property type="term" value="F:4 iron, 4 sulfur cluster binding"/>
    <property type="evidence" value="ECO:0007669"/>
    <property type="project" value="UniProtKB-KW"/>
</dbReference>
<dbReference type="GO" id="GO:0043365">
    <property type="term" value="F:[formate-C-acetyltransferase]-activating enzyme activity"/>
    <property type="evidence" value="ECO:0007669"/>
    <property type="project" value="UniProtKB-EC"/>
</dbReference>
<dbReference type="GO" id="GO:0046872">
    <property type="term" value="F:metal ion binding"/>
    <property type="evidence" value="ECO:0007669"/>
    <property type="project" value="UniProtKB-KW"/>
</dbReference>
<dbReference type="GO" id="GO:0006006">
    <property type="term" value="P:glucose metabolic process"/>
    <property type="evidence" value="ECO:0007669"/>
    <property type="project" value="UniProtKB-KW"/>
</dbReference>
<dbReference type="CDD" id="cd01335">
    <property type="entry name" value="Radical_SAM"/>
    <property type="match status" value="1"/>
</dbReference>
<dbReference type="Gene3D" id="3.20.20.70">
    <property type="entry name" value="Aldolase class I"/>
    <property type="match status" value="1"/>
</dbReference>
<dbReference type="InterPro" id="IPR013785">
    <property type="entry name" value="Aldolase_TIM"/>
</dbReference>
<dbReference type="InterPro" id="IPR040074">
    <property type="entry name" value="BssD/PflA/YjjW"/>
</dbReference>
<dbReference type="InterPro" id="IPR034457">
    <property type="entry name" value="Organic_radical-activating"/>
</dbReference>
<dbReference type="InterPro" id="IPR012839">
    <property type="entry name" value="Organic_radical_activase"/>
</dbReference>
<dbReference type="InterPro" id="IPR012838">
    <property type="entry name" value="PFL1_activating"/>
</dbReference>
<dbReference type="InterPro" id="IPR034465">
    <property type="entry name" value="Pyruvate_for-lyase_activase"/>
</dbReference>
<dbReference type="InterPro" id="IPR001989">
    <property type="entry name" value="Radical_activat_CS"/>
</dbReference>
<dbReference type="InterPro" id="IPR007197">
    <property type="entry name" value="rSAM"/>
</dbReference>
<dbReference type="NCBIfam" id="TIGR02493">
    <property type="entry name" value="PFLA"/>
    <property type="match status" value="1"/>
</dbReference>
<dbReference type="PANTHER" id="PTHR30352:SF5">
    <property type="entry name" value="PYRUVATE FORMATE-LYASE 1-ACTIVATING ENZYME"/>
    <property type="match status" value="1"/>
</dbReference>
<dbReference type="PANTHER" id="PTHR30352">
    <property type="entry name" value="PYRUVATE FORMATE-LYASE-ACTIVATING ENZYME"/>
    <property type="match status" value="1"/>
</dbReference>
<dbReference type="Pfam" id="PF13353">
    <property type="entry name" value="Fer4_12"/>
    <property type="match status" value="1"/>
</dbReference>
<dbReference type="Pfam" id="PF04055">
    <property type="entry name" value="Radical_SAM"/>
    <property type="match status" value="1"/>
</dbReference>
<dbReference type="PIRSF" id="PIRSF000371">
    <property type="entry name" value="PFL_act_enz"/>
    <property type="match status" value="1"/>
</dbReference>
<dbReference type="SFLD" id="SFLDG01118">
    <property type="entry name" value="activating_enzymes__group_2"/>
    <property type="match status" value="1"/>
</dbReference>
<dbReference type="SFLD" id="SFLDF00278">
    <property type="entry name" value="pyruvate_formate-lyase_activas"/>
    <property type="match status" value="1"/>
</dbReference>
<dbReference type="SUPFAM" id="SSF102114">
    <property type="entry name" value="Radical SAM enzymes"/>
    <property type="match status" value="1"/>
</dbReference>
<dbReference type="PROSITE" id="PS01087">
    <property type="entry name" value="RADICAL_ACTIVATING"/>
    <property type="match status" value="1"/>
</dbReference>
<dbReference type="PROSITE" id="PS51918">
    <property type="entry name" value="RADICAL_SAM"/>
    <property type="match status" value="1"/>
</dbReference>
<proteinExistence type="inferred from homology"/>
<feature type="chain" id="PRO_0000271709" description="Pyruvate formate-lyase-activating enzyme">
    <location>
        <begin position="1"/>
        <end position="251"/>
    </location>
</feature>
<feature type="domain" description="Radical SAM core" evidence="3">
    <location>
        <begin position="15"/>
        <end position="244"/>
    </location>
</feature>
<feature type="binding site" evidence="2">
    <location>
        <position position="29"/>
    </location>
    <ligand>
        <name>[4Fe-4S] cluster</name>
        <dbReference type="ChEBI" id="CHEBI:49883"/>
        <note>4Fe-4S-S-AdoMet</note>
    </ligand>
</feature>
<feature type="binding site" evidence="2">
    <location>
        <position position="33"/>
    </location>
    <ligand>
        <name>[4Fe-4S] cluster</name>
        <dbReference type="ChEBI" id="CHEBI:49883"/>
        <note>4Fe-4S-S-AdoMet</note>
    </ligand>
</feature>
<feature type="binding site" evidence="2">
    <location>
        <begin position="35"/>
        <end position="37"/>
    </location>
    <ligand>
        <name>S-adenosyl-L-methionine</name>
        <dbReference type="ChEBI" id="CHEBI:59789"/>
    </ligand>
</feature>
<feature type="binding site" evidence="2">
    <location>
        <position position="36"/>
    </location>
    <ligand>
        <name>[4Fe-4S] cluster</name>
        <dbReference type="ChEBI" id="CHEBI:49883"/>
        <note>4Fe-4S-S-AdoMet</note>
    </ligand>
</feature>
<feature type="binding site" evidence="2">
    <location>
        <position position="79"/>
    </location>
    <ligand>
        <name>S-adenosyl-L-methionine</name>
        <dbReference type="ChEBI" id="CHEBI:59789"/>
    </ligand>
</feature>
<feature type="binding site" evidence="2">
    <location>
        <begin position="134"/>
        <end position="136"/>
    </location>
    <ligand>
        <name>S-adenosyl-L-methionine</name>
        <dbReference type="ChEBI" id="CHEBI:59789"/>
    </ligand>
</feature>
<feature type="binding site" evidence="2">
    <location>
        <position position="207"/>
    </location>
    <ligand>
        <name>S-adenosyl-L-methionine</name>
        <dbReference type="ChEBI" id="CHEBI:59789"/>
    </ligand>
</feature>
<keyword id="KW-0004">4Fe-4S</keyword>
<keyword id="KW-0119">Carbohydrate metabolism</keyword>
<keyword id="KW-0963">Cytoplasm</keyword>
<keyword id="KW-0313">Glucose metabolism</keyword>
<keyword id="KW-0408">Iron</keyword>
<keyword id="KW-0411">Iron-sulfur</keyword>
<keyword id="KW-0479">Metal-binding</keyword>
<keyword id="KW-0560">Oxidoreductase</keyword>
<keyword id="KW-1185">Reference proteome</keyword>
<keyword id="KW-0949">S-adenosyl-L-methionine</keyword>
<accession>Q2G1D7</accession>